<reference key="1">
    <citation type="journal article" date="2009" name="Appl. Environ. Microbiol.">
        <title>Novel features of the polysaccharide-digesting gliding bacterium Flavobacterium johnsoniae as revealed by genome sequence analysis.</title>
        <authorList>
            <person name="McBride M.J."/>
            <person name="Xie G."/>
            <person name="Martens E.C."/>
            <person name="Lapidus A."/>
            <person name="Henrissat B."/>
            <person name="Rhodes R.G."/>
            <person name="Goltsman E."/>
            <person name="Wang W."/>
            <person name="Xu J."/>
            <person name="Hunnicutt D.W."/>
            <person name="Staroscik A.M."/>
            <person name="Hoover T.R."/>
            <person name="Cheng Y.Q."/>
            <person name="Stein J.L."/>
        </authorList>
    </citation>
    <scope>NUCLEOTIDE SEQUENCE [LARGE SCALE GENOMIC DNA]</scope>
    <source>
        <strain>ATCC 17061 / DSM 2064 / JCM 8514 / BCRC 14874 / CCUG 350202 / NBRC 14942 / NCIMB 11054 / UW101</strain>
    </source>
</reference>
<evidence type="ECO:0000255" key="1">
    <source>
        <dbReference type="HAMAP-Rule" id="MF_00385"/>
    </source>
</evidence>
<evidence type="ECO:0000256" key="2">
    <source>
        <dbReference type="SAM" id="MobiDB-lite"/>
    </source>
</evidence>
<evidence type="ECO:0000305" key="3"/>
<sequence length="188" mass="20016">MSVKIRLQRHGKKGKPFYWVVAADARSKRDGKYLEKIGTYNPNTNPATVELNLDSAVKWLHNGAQPTDTARAILSYKGALLKHHLDGGVRKGALTQEQADAKLTAWLEAKAGKVDAKKDGLSKAQADAKAKALKAEKEVNDKRIAAAAKAEADAIAAASATEEAATEEVAEAAEEAPAAEENNETTEA</sequence>
<comment type="similarity">
    <text evidence="1">Belongs to the bacterial ribosomal protein bS16 family.</text>
</comment>
<feature type="chain" id="PRO_1000080150" description="Small ribosomal subunit protein bS16">
    <location>
        <begin position="1"/>
        <end position="188"/>
    </location>
</feature>
<feature type="region of interest" description="Disordered" evidence="2">
    <location>
        <begin position="155"/>
        <end position="188"/>
    </location>
</feature>
<feature type="compositionally biased region" description="Acidic residues" evidence="2">
    <location>
        <begin position="164"/>
        <end position="188"/>
    </location>
</feature>
<gene>
    <name evidence="1" type="primary">rpsP</name>
    <name type="ordered locus">Fjoh_1301</name>
</gene>
<organism>
    <name type="scientific">Flavobacterium johnsoniae (strain ATCC 17061 / DSM 2064 / JCM 8514 / BCRC 14874 / CCUG 350202 / NBRC 14942 / NCIMB 11054 / UW101)</name>
    <name type="common">Cytophaga johnsonae</name>
    <dbReference type="NCBI Taxonomy" id="376686"/>
    <lineage>
        <taxon>Bacteria</taxon>
        <taxon>Pseudomonadati</taxon>
        <taxon>Bacteroidota</taxon>
        <taxon>Flavobacteriia</taxon>
        <taxon>Flavobacteriales</taxon>
        <taxon>Flavobacteriaceae</taxon>
        <taxon>Flavobacterium</taxon>
    </lineage>
</organism>
<protein>
    <recommendedName>
        <fullName evidence="1">Small ribosomal subunit protein bS16</fullName>
    </recommendedName>
    <alternativeName>
        <fullName evidence="3">30S ribosomal protein S16</fullName>
    </alternativeName>
</protein>
<dbReference type="EMBL" id="CP000685">
    <property type="protein sequence ID" value="ABQ04333.1"/>
    <property type="molecule type" value="Genomic_DNA"/>
</dbReference>
<dbReference type="RefSeq" id="WP_012023382.1">
    <property type="nucleotide sequence ID" value="NC_009441.1"/>
</dbReference>
<dbReference type="SMR" id="A5FKD9"/>
<dbReference type="STRING" id="376686.Fjoh_1301"/>
<dbReference type="KEGG" id="fjo:Fjoh_1301"/>
<dbReference type="eggNOG" id="COG0228">
    <property type="taxonomic scope" value="Bacteria"/>
</dbReference>
<dbReference type="HOGENOM" id="CLU_100590_0_0_10"/>
<dbReference type="OrthoDB" id="9807878at2"/>
<dbReference type="Proteomes" id="UP000006694">
    <property type="component" value="Chromosome"/>
</dbReference>
<dbReference type="GO" id="GO:0005737">
    <property type="term" value="C:cytoplasm"/>
    <property type="evidence" value="ECO:0007669"/>
    <property type="project" value="UniProtKB-ARBA"/>
</dbReference>
<dbReference type="GO" id="GO:0015935">
    <property type="term" value="C:small ribosomal subunit"/>
    <property type="evidence" value="ECO:0007669"/>
    <property type="project" value="TreeGrafter"/>
</dbReference>
<dbReference type="GO" id="GO:0003735">
    <property type="term" value="F:structural constituent of ribosome"/>
    <property type="evidence" value="ECO:0007669"/>
    <property type="project" value="InterPro"/>
</dbReference>
<dbReference type="GO" id="GO:0006412">
    <property type="term" value="P:translation"/>
    <property type="evidence" value="ECO:0007669"/>
    <property type="project" value="UniProtKB-UniRule"/>
</dbReference>
<dbReference type="Gene3D" id="3.30.1320.10">
    <property type="match status" value="1"/>
</dbReference>
<dbReference type="HAMAP" id="MF_00385">
    <property type="entry name" value="Ribosomal_bS16"/>
    <property type="match status" value="1"/>
</dbReference>
<dbReference type="InterPro" id="IPR000307">
    <property type="entry name" value="Ribosomal_bS16"/>
</dbReference>
<dbReference type="InterPro" id="IPR023803">
    <property type="entry name" value="Ribosomal_bS16_dom_sf"/>
</dbReference>
<dbReference type="NCBIfam" id="NF011094">
    <property type="entry name" value="PRK14521.1"/>
    <property type="match status" value="1"/>
</dbReference>
<dbReference type="NCBIfam" id="TIGR00002">
    <property type="entry name" value="S16"/>
    <property type="match status" value="1"/>
</dbReference>
<dbReference type="PANTHER" id="PTHR12919">
    <property type="entry name" value="30S RIBOSOMAL PROTEIN S16"/>
    <property type="match status" value="1"/>
</dbReference>
<dbReference type="PANTHER" id="PTHR12919:SF20">
    <property type="entry name" value="SMALL RIBOSOMAL SUBUNIT PROTEIN BS16M"/>
    <property type="match status" value="1"/>
</dbReference>
<dbReference type="Pfam" id="PF00886">
    <property type="entry name" value="Ribosomal_S16"/>
    <property type="match status" value="1"/>
</dbReference>
<dbReference type="SUPFAM" id="SSF54565">
    <property type="entry name" value="Ribosomal protein S16"/>
    <property type="match status" value="1"/>
</dbReference>
<accession>A5FKD9</accession>
<name>RS16_FLAJ1</name>
<keyword id="KW-0687">Ribonucleoprotein</keyword>
<keyword id="KW-0689">Ribosomal protein</keyword>
<proteinExistence type="inferred from homology"/>